<sequence>MDGQDIGAGGGCPFSGANTNKGRRSNRDWWPNQLNLSILHQHQARQNPLGETFNYAEAFKSLDLDAVKKDLIALMTDSQDWWPADYGHYGGLMIRMAWHSAGTYRTADGRGGASTGTQRFAPLNSWPDNGNLDKARMLLWPIKKKYGNALSWADLMILAGNCAIESMGLKPFGFGGGRADVWEPEEDIYWGAEDEWLATSDHAQARYSGDRVLEDPLAAVQMGLIYVNPEGPDGNPDPIASGRDIRETFARMAMNDEETVALTAGGHTFGKAHGNGPVDAVGPEPEAAPIEAMGQGWLSSHKSGKGVDTITSGIEGAWTPNPIQWDMGYFDVLFGYDWELTKSPAGAWIWHAKDLKEDDHAPEVDGSGKKVPIMMTTADMAMKMDPIYGPISKRFHENPEEFAEAFKRAWFKLTHRDMGPKACYLGADVPDEDLIWQDPLPAVDHALIEEADIASLKADILASGLSVQDLVYVAWSSASTFRGSDKRGGANGARIRLAPQKDWEVNEPAKLEKVLNALEGIQSSFNAAASGGKKVSLADLIVLAGSAAVEKAAKDAGFDVTVPFTPGRTDATDEQTDVESFDVMEPQIDGFRNYAPKKFSVSTEEMLVDKAQLLTLSAPEMTVLVGGLRAIGANYGDSAHGVLTSRKGQLTNDFFVNVLDLGTKWTATDDSGEIFEGADRATGEVKWTGTRADLIFGSNSQLRALSEVYAQDDNAGKMVADFVKAWVKVMELDRFDLK</sequence>
<feature type="chain" id="PRO_0000354934" description="Catalase-peroxidase">
    <location>
        <begin position="1"/>
        <end position="738"/>
    </location>
</feature>
<feature type="region of interest" description="Disordered" evidence="2">
    <location>
        <begin position="1"/>
        <end position="26"/>
    </location>
</feature>
<feature type="compositionally biased region" description="Gly residues" evidence="2">
    <location>
        <begin position="1"/>
        <end position="13"/>
    </location>
</feature>
<feature type="active site" description="Proton acceptor" evidence="1">
    <location>
        <position position="99"/>
    </location>
</feature>
<feature type="binding site" description="axial binding residue" evidence="1">
    <location>
        <position position="267"/>
    </location>
    <ligand>
        <name>heme b</name>
        <dbReference type="ChEBI" id="CHEBI:60344"/>
    </ligand>
    <ligandPart>
        <name>Fe</name>
        <dbReference type="ChEBI" id="CHEBI:18248"/>
    </ligandPart>
</feature>
<feature type="site" description="Transition state stabilizer" evidence="1">
    <location>
        <position position="95"/>
    </location>
</feature>
<feature type="cross-link" description="Tryptophyl-tyrosyl-methioninium (Trp-Tyr) (with M-252)" evidence="1">
    <location>
        <begin position="98"/>
        <end position="226"/>
    </location>
</feature>
<feature type="cross-link" description="Tryptophyl-tyrosyl-methioninium (Tyr-Met) (with W-98)" evidence="1">
    <location>
        <begin position="226"/>
        <end position="252"/>
    </location>
</feature>
<evidence type="ECO:0000255" key="1">
    <source>
        <dbReference type="HAMAP-Rule" id="MF_01961"/>
    </source>
</evidence>
<evidence type="ECO:0000256" key="2">
    <source>
        <dbReference type="SAM" id="MobiDB-lite"/>
    </source>
</evidence>
<comment type="function">
    <text evidence="1">Bifunctional enzyme with both catalase and broad-spectrum peroxidase activity.</text>
</comment>
<comment type="catalytic activity">
    <reaction evidence="1">
        <text>H2O2 + AH2 = A + 2 H2O</text>
        <dbReference type="Rhea" id="RHEA:30275"/>
        <dbReference type="ChEBI" id="CHEBI:13193"/>
        <dbReference type="ChEBI" id="CHEBI:15377"/>
        <dbReference type="ChEBI" id="CHEBI:16240"/>
        <dbReference type="ChEBI" id="CHEBI:17499"/>
        <dbReference type="EC" id="1.11.1.21"/>
    </reaction>
</comment>
<comment type="catalytic activity">
    <reaction evidence="1">
        <text>2 H2O2 = O2 + 2 H2O</text>
        <dbReference type="Rhea" id="RHEA:20309"/>
        <dbReference type="ChEBI" id="CHEBI:15377"/>
        <dbReference type="ChEBI" id="CHEBI:15379"/>
        <dbReference type="ChEBI" id="CHEBI:16240"/>
        <dbReference type="EC" id="1.11.1.21"/>
    </reaction>
</comment>
<comment type="cofactor">
    <cofactor evidence="1">
        <name>heme b</name>
        <dbReference type="ChEBI" id="CHEBI:60344"/>
    </cofactor>
    <text evidence="1">Binds 1 heme b (iron(II)-protoporphyrin IX) group per dimer.</text>
</comment>
<comment type="subunit">
    <text evidence="1">Homodimer or homotetramer.</text>
</comment>
<comment type="PTM">
    <text evidence="1">Formation of the three residue Trp-Tyr-Met cross-link is important for the catalase, but not the peroxidase activity of the enzyme.</text>
</comment>
<comment type="similarity">
    <text evidence="1">Belongs to the peroxidase family. Peroxidase/catalase subfamily.</text>
</comment>
<dbReference type="EC" id="1.11.1.21" evidence="1"/>
<dbReference type="EMBL" id="CP000377">
    <property type="protein sequence ID" value="ABF65523.1"/>
    <property type="molecule type" value="Genomic_DNA"/>
</dbReference>
<dbReference type="RefSeq" id="WP_011540105.1">
    <property type="nucleotide sequence ID" value="NC_008044.1"/>
</dbReference>
<dbReference type="SMR" id="Q1GCU3"/>
<dbReference type="STRING" id="292414.TM1040_2791"/>
<dbReference type="PeroxiBase" id="2715">
    <property type="entry name" value="SIsCP01"/>
</dbReference>
<dbReference type="KEGG" id="sit:TM1040_2791"/>
<dbReference type="eggNOG" id="COG0376">
    <property type="taxonomic scope" value="Bacteria"/>
</dbReference>
<dbReference type="HOGENOM" id="CLU_025424_2_0_5"/>
<dbReference type="OrthoDB" id="9759743at2"/>
<dbReference type="Proteomes" id="UP000000636">
    <property type="component" value="Chromosome"/>
</dbReference>
<dbReference type="GO" id="GO:0005829">
    <property type="term" value="C:cytosol"/>
    <property type="evidence" value="ECO:0007669"/>
    <property type="project" value="TreeGrafter"/>
</dbReference>
<dbReference type="GO" id="GO:0004096">
    <property type="term" value="F:catalase activity"/>
    <property type="evidence" value="ECO:0007669"/>
    <property type="project" value="UniProtKB-UniRule"/>
</dbReference>
<dbReference type="GO" id="GO:0020037">
    <property type="term" value="F:heme binding"/>
    <property type="evidence" value="ECO:0007669"/>
    <property type="project" value="InterPro"/>
</dbReference>
<dbReference type="GO" id="GO:0046872">
    <property type="term" value="F:metal ion binding"/>
    <property type="evidence" value="ECO:0007669"/>
    <property type="project" value="UniProtKB-KW"/>
</dbReference>
<dbReference type="GO" id="GO:0070301">
    <property type="term" value="P:cellular response to hydrogen peroxide"/>
    <property type="evidence" value="ECO:0007669"/>
    <property type="project" value="TreeGrafter"/>
</dbReference>
<dbReference type="GO" id="GO:0042744">
    <property type="term" value="P:hydrogen peroxide catabolic process"/>
    <property type="evidence" value="ECO:0007669"/>
    <property type="project" value="UniProtKB-KW"/>
</dbReference>
<dbReference type="CDD" id="cd00649">
    <property type="entry name" value="catalase_peroxidase_1"/>
    <property type="match status" value="1"/>
</dbReference>
<dbReference type="CDD" id="cd08200">
    <property type="entry name" value="catalase_peroxidase_2"/>
    <property type="match status" value="1"/>
</dbReference>
<dbReference type="FunFam" id="1.10.420.10:FF:000004">
    <property type="entry name" value="Catalase-peroxidase"/>
    <property type="match status" value="1"/>
</dbReference>
<dbReference type="FunFam" id="1.10.520.10:FF:000002">
    <property type="entry name" value="Catalase-peroxidase"/>
    <property type="match status" value="1"/>
</dbReference>
<dbReference type="Gene3D" id="1.10.520.10">
    <property type="match status" value="2"/>
</dbReference>
<dbReference type="Gene3D" id="1.10.420.10">
    <property type="entry name" value="Peroxidase, domain 2"/>
    <property type="match status" value="2"/>
</dbReference>
<dbReference type="HAMAP" id="MF_01961">
    <property type="entry name" value="Catal_peroxid"/>
    <property type="match status" value="1"/>
</dbReference>
<dbReference type="InterPro" id="IPR000763">
    <property type="entry name" value="Catalase_peroxidase"/>
</dbReference>
<dbReference type="InterPro" id="IPR002016">
    <property type="entry name" value="Haem_peroxidase"/>
</dbReference>
<dbReference type="InterPro" id="IPR010255">
    <property type="entry name" value="Haem_peroxidase_sf"/>
</dbReference>
<dbReference type="InterPro" id="IPR019794">
    <property type="entry name" value="Peroxidases_AS"/>
</dbReference>
<dbReference type="NCBIfam" id="TIGR00198">
    <property type="entry name" value="cat_per_HPI"/>
    <property type="match status" value="1"/>
</dbReference>
<dbReference type="NCBIfam" id="NF011635">
    <property type="entry name" value="PRK15061.1"/>
    <property type="match status" value="1"/>
</dbReference>
<dbReference type="PANTHER" id="PTHR30555:SF0">
    <property type="entry name" value="CATALASE-PEROXIDASE"/>
    <property type="match status" value="1"/>
</dbReference>
<dbReference type="PANTHER" id="PTHR30555">
    <property type="entry name" value="HYDROPEROXIDASE I, BIFUNCTIONAL CATALASE-PEROXIDASE"/>
    <property type="match status" value="1"/>
</dbReference>
<dbReference type="Pfam" id="PF00141">
    <property type="entry name" value="peroxidase"/>
    <property type="match status" value="2"/>
</dbReference>
<dbReference type="PRINTS" id="PR00460">
    <property type="entry name" value="BPEROXIDASE"/>
</dbReference>
<dbReference type="PRINTS" id="PR00458">
    <property type="entry name" value="PEROXIDASE"/>
</dbReference>
<dbReference type="SUPFAM" id="SSF48113">
    <property type="entry name" value="Heme-dependent peroxidases"/>
    <property type="match status" value="2"/>
</dbReference>
<dbReference type="PROSITE" id="PS00436">
    <property type="entry name" value="PEROXIDASE_2"/>
    <property type="match status" value="1"/>
</dbReference>
<dbReference type="PROSITE" id="PS50873">
    <property type="entry name" value="PEROXIDASE_4"/>
    <property type="match status" value="1"/>
</dbReference>
<protein>
    <recommendedName>
        <fullName evidence="1">Catalase-peroxidase</fullName>
        <shortName evidence="1">CP</shortName>
        <ecNumber evidence="1">1.11.1.21</ecNumber>
    </recommendedName>
    <alternativeName>
        <fullName evidence="1">Peroxidase/catalase</fullName>
    </alternativeName>
</protein>
<organism>
    <name type="scientific">Ruegeria sp. (strain TM1040)</name>
    <name type="common">Silicibacter sp.</name>
    <dbReference type="NCBI Taxonomy" id="292414"/>
    <lineage>
        <taxon>Bacteria</taxon>
        <taxon>Pseudomonadati</taxon>
        <taxon>Pseudomonadota</taxon>
        <taxon>Alphaproteobacteria</taxon>
        <taxon>Rhodobacterales</taxon>
        <taxon>Roseobacteraceae</taxon>
        <taxon>Ruegeria</taxon>
    </lineage>
</organism>
<keyword id="KW-0349">Heme</keyword>
<keyword id="KW-0376">Hydrogen peroxide</keyword>
<keyword id="KW-0408">Iron</keyword>
<keyword id="KW-0479">Metal-binding</keyword>
<keyword id="KW-0560">Oxidoreductase</keyword>
<keyword id="KW-0575">Peroxidase</keyword>
<keyword id="KW-1185">Reference proteome</keyword>
<proteinExistence type="inferred from homology"/>
<name>KATG_RUEST</name>
<reference key="1">
    <citation type="submission" date="2006-05" db="EMBL/GenBank/DDBJ databases">
        <title>Complete sequence of chromosome of Silicibacter sp. TM1040.</title>
        <authorList>
            <consortium name="US DOE Joint Genome Institute"/>
            <person name="Copeland A."/>
            <person name="Lucas S."/>
            <person name="Lapidus A."/>
            <person name="Barry K."/>
            <person name="Detter J.C."/>
            <person name="Glavina del Rio T."/>
            <person name="Hammon N."/>
            <person name="Israni S."/>
            <person name="Dalin E."/>
            <person name="Tice H."/>
            <person name="Pitluck S."/>
            <person name="Brettin T."/>
            <person name="Bruce D."/>
            <person name="Han C."/>
            <person name="Tapia R."/>
            <person name="Goodwin L."/>
            <person name="Thompson L.S."/>
            <person name="Gilna P."/>
            <person name="Schmutz J."/>
            <person name="Larimer F."/>
            <person name="Land M."/>
            <person name="Hauser L."/>
            <person name="Kyrpides N."/>
            <person name="Kim E."/>
            <person name="Belas R."/>
            <person name="Moran M.A."/>
            <person name="Buchan A."/>
            <person name="Gonzalez J.M."/>
            <person name="Schell M.A."/>
            <person name="Sun F."/>
            <person name="Richardson P."/>
        </authorList>
    </citation>
    <scope>NUCLEOTIDE SEQUENCE [LARGE SCALE GENOMIC DNA]</scope>
    <source>
        <strain>TM1040</strain>
    </source>
</reference>
<gene>
    <name evidence="1" type="primary">katG</name>
    <name type="ordered locus">TM1040_2791</name>
</gene>
<accession>Q1GCU3</accession>